<evidence type="ECO:0000255" key="1">
    <source>
        <dbReference type="HAMAP-Rule" id="MF_00550"/>
    </source>
</evidence>
<dbReference type="EC" id="3.4.11.4" evidence="1"/>
<dbReference type="EMBL" id="CU928162">
    <property type="protein sequence ID" value="CAR07472.1"/>
    <property type="molecule type" value="Genomic_DNA"/>
</dbReference>
<dbReference type="RefSeq" id="WP_000359446.1">
    <property type="nucleotide sequence ID" value="NC_011745.1"/>
</dbReference>
<dbReference type="SMR" id="B7MTQ8"/>
<dbReference type="MEROPS" id="M20.003"/>
<dbReference type="GeneID" id="93776283"/>
<dbReference type="KEGG" id="ecq:ECED1_1271"/>
<dbReference type="HOGENOM" id="CLU_053676_0_0_6"/>
<dbReference type="Proteomes" id="UP000000748">
    <property type="component" value="Chromosome"/>
</dbReference>
<dbReference type="GO" id="GO:0005829">
    <property type="term" value="C:cytosol"/>
    <property type="evidence" value="ECO:0007669"/>
    <property type="project" value="TreeGrafter"/>
</dbReference>
<dbReference type="GO" id="GO:0008237">
    <property type="term" value="F:metallopeptidase activity"/>
    <property type="evidence" value="ECO:0007669"/>
    <property type="project" value="UniProtKB-KW"/>
</dbReference>
<dbReference type="GO" id="GO:0045148">
    <property type="term" value="F:tripeptide aminopeptidase activity"/>
    <property type="evidence" value="ECO:0007669"/>
    <property type="project" value="UniProtKB-UniRule"/>
</dbReference>
<dbReference type="GO" id="GO:0008270">
    <property type="term" value="F:zinc ion binding"/>
    <property type="evidence" value="ECO:0007669"/>
    <property type="project" value="UniProtKB-UniRule"/>
</dbReference>
<dbReference type="GO" id="GO:0043171">
    <property type="term" value="P:peptide catabolic process"/>
    <property type="evidence" value="ECO:0007669"/>
    <property type="project" value="UniProtKB-UniRule"/>
</dbReference>
<dbReference type="GO" id="GO:0006508">
    <property type="term" value="P:proteolysis"/>
    <property type="evidence" value="ECO:0007669"/>
    <property type="project" value="UniProtKB-UniRule"/>
</dbReference>
<dbReference type="CDD" id="cd03892">
    <property type="entry name" value="M20_peptT"/>
    <property type="match status" value="1"/>
</dbReference>
<dbReference type="FunFam" id="3.30.70.360:FF:000002">
    <property type="entry name" value="Peptidase T"/>
    <property type="match status" value="1"/>
</dbReference>
<dbReference type="Gene3D" id="3.30.70.360">
    <property type="match status" value="1"/>
</dbReference>
<dbReference type="Gene3D" id="3.40.630.10">
    <property type="entry name" value="Zn peptidases"/>
    <property type="match status" value="1"/>
</dbReference>
<dbReference type="HAMAP" id="MF_00550">
    <property type="entry name" value="Aminopeptidase_M20"/>
    <property type="match status" value="1"/>
</dbReference>
<dbReference type="InterPro" id="IPR001261">
    <property type="entry name" value="ArgE/DapE_CS"/>
</dbReference>
<dbReference type="InterPro" id="IPR036264">
    <property type="entry name" value="Bact_exopeptidase_dim_dom"/>
</dbReference>
<dbReference type="InterPro" id="IPR002933">
    <property type="entry name" value="Peptidase_M20"/>
</dbReference>
<dbReference type="InterPro" id="IPR011650">
    <property type="entry name" value="Peptidase_M20_dimer"/>
</dbReference>
<dbReference type="InterPro" id="IPR010161">
    <property type="entry name" value="Peptidase_M20B"/>
</dbReference>
<dbReference type="NCBIfam" id="TIGR01882">
    <property type="entry name" value="peptidase-T"/>
    <property type="match status" value="1"/>
</dbReference>
<dbReference type="NCBIfam" id="NF003976">
    <property type="entry name" value="PRK05469.1"/>
    <property type="match status" value="1"/>
</dbReference>
<dbReference type="NCBIfam" id="NF009920">
    <property type="entry name" value="PRK13381.1"/>
    <property type="match status" value="1"/>
</dbReference>
<dbReference type="PANTHER" id="PTHR42994">
    <property type="entry name" value="PEPTIDASE T"/>
    <property type="match status" value="1"/>
</dbReference>
<dbReference type="PANTHER" id="PTHR42994:SF1">
    <property type="entry name" value="PEPTIDASE T"/>
    <property type="match status" value="1"/>
</dbReference>
<dbReference type="Pfam" id="PF07687">
    <property type="entry name" value="M20_dimer"/>
    <property type="match status" value="1"/>
</dbReference>
<dbReference type="Pfam" id="PF01546">
    <property type="entry name" value="Peptidase_M20"/>
    <property type="match status" value="1"/>
</dbReference>
<dbReference type="PIRSF" id="PIRSF037215">
    <property type="entry name" value="Peptidase_M20B"/>
    <property type="match status" value="1"/>
</dbReference>
<dbReference type="SUPFAM" id="SSF55031">
    <property type="entry name" value="Bacterial exopeptidase dimerisation domain"/>
    <property type="match status" value="1"/>
</dbReference>
<dbReference type="SUPFAM" id="SSF53187">
    <property type="entry name" value="Zn-dependent exopeptidases"/>
    <property type="match status" value="1"/>
</dbReference>
<dbReference type="PROSITE" id="PS00758">
    <property type="entry name" value="ARGE_DAPE_CPG2_1"/>
    <property type="match status" value="1"/>
</dbReference>
<dbReference type="PROSITE" id="PS00759">
    <property type="entry name" value="ARGE_DAPE_CPG2_2"/>
    <property type="match status" value="1"/>
</dbReference>
<sequence>MDKLLERFLNYVSLDTQSKAGVRQVPSTEGQWKLLHLLKEQLEEMGLINVTLSEKGTLMATLPANVPGDIPAIGFISHVDTSPDCSGKNVNPQIVENYRGGDIALGIGDEVLSPVMFPVLHQLLGQTLITTDGKTLLGADDKAGIAEIMTALAVLQQKNIPHGDIRVAFTPDEEVGKGAKHFDVDAFDARWAYTVDGGGVGELEFENFNAASVNIKIVGNNVHPGTAKGVMVNALSLAARIHAEVPADESPEMTEGYEGFYHLASMKGTVERADMHYIIRDFDRKQFEARKRKMMEIAKKVGKGLHPDCYIELVIEDSYYNMREKVVEHPHILDIAQQAMRDCDIEPELKPIRGGTDGAQLSFMGLPCPNLFTGGYNYHGKHEFVTLEGMEKAVQVIVRIAELTAQRK</sequence>
<gene>
    <name evidence="1" type="primary">pepT</name>
    <name type="ordered locus">ECED1_1271</name>
</gene>
<feature type="chain" id="PRO_1000200888" description="Peptidase T">
    <location>
        <begin position="1"/>
        <end position="408"/>
    </location>
</feature>
<feature type="active site" evidence="1">
    <location>
        <position position="80"/>
    </location>
</feature>
<feature type="active site" description="Proton acceptor" evidence="1">
    <location>
        <position position="173"/>
    </location>
</feature>
<feature type="binding site" evidence="1">
    <location>
        <position position="78"/>
    </location>
    <ligand>
        <name>Zn(2+)</name>
        <dbReference type="ChEBI" id="CHEBI:29105"/>
        <label>1</label>
    </ligand>
</feature>
<feature type="binding site" evidence="1">
    <location>
        <position position="140"/>
    </location>
    <ligand>
        <name>Zn(2+)</name>
        <dbReference type="ChEBI" id="CHEBI:29105"/>
        <label>1</label>
    </ligand>
</feature>
<feature type="binding site" evidence="1">
    <location>
        <position position="140"/>
    </location>
    <ligand>
        <name>Zn(2+)</name>
        <dbReference type="ChEBI" id="CHEBI:29105"/>
        <label>2</label>
    </ligand>
</feature>
<feature type="binding site" evidence="1">
    <location>
        <position position="174"/>
    </location>
    <ligand>
        <name>Zn(2+)</name>
        <dbReference type="ChEBI" id="CHEBI:29105"/>
        <label>2</label>
    </ligand>
</feature>
<feature type="binding site" evidence="1">
    <location>
        <position position="196"/>
    </location>
    <ligand>
        <name>Zn(2+)</name>
        <dbReference type="ChEBI" id="CHEBI:29105"/>
        <label>1</label>
    </ligand>
</feature>
<feature type="binding site" evidence="1">
    <location>
        <position position="379"/>
    </location>
    <ligand>
        <name>Zn(2+)</name>
        <dbReference type="ChEBI" id="CHEBI:29105"/>
        <label>2</label>
    </ligand>
</feature>
<protein>
    <recommendedName>
        <fullName evidence="1">Peptidase T</fullName>
        <ecNumber evidence="1">3.4.11.4</ecNumber>
    </recommendedName>
    <alternativeName>
        <fullName evidence="1">Aminotripeptidase</fullName>
        <shortName evidence="1">Tripeptidase</shortName>
    </alternativeName>
    <alternativeName>
        <fullName evidence="1">Tripeptide aminopeptidase</fullName>
    </alternativeName>
</protein>
<accession>B7MTQ8</accession>
<reference key="1">
    <citation type="journal article" date="2009" name="PLoS Genet.">
        <title>Organised genome dynamics in the Escherichia coli species results in highly diverse adaptive paths.</title>
        <authorList>
            <person name="Touchon M."/>
            <person name="Hoede C."/>
            <person name="Tenaillon O."/>
            <person name="Barbe V."/>
            <person name="Baeriswyl S."/>
            <person name="Bidet P."/>
            <person name="Bingen E."/>
            <person name="Bonacorsi S."/>
            <person name="Bouchier C."/>
            <person name="Bouvet O."/>
            <person name="Calteau A."/>
            <person name="Chiapello H."/>
            <person name="Clermont O."/>
            <person name="Cruveiller S."/>
            <person name="Danchin A."/>
            <person name="Diard M."/>
            <person name="Dossat C."/>
            <person name="Karoui M.E."/>
            <person name="Frapy E."/>
            <person name="Garry L."/>
            <person name="Ghigo J.M."/>
            <person name="Gilles A.M."/>
            <person name="Johnson J."/>
            <person name="Le Bouguenec C."/>
            <person name="Lescat M."/>
            <person name="Mangenot S."/>
            <person name="Martinez-Jehanne V."/>
            <person name="Matic I."/>
            <person name="Nassif X."/>
            <person name="Oztas S."/>
            <person name="Petit M.A."/>
            <person name="Pichon C."/>
            <person name="Rouy Z."/>
            <person name="Ruf C.S."/>
            <person name="Schneider D."/>
            <person name="Tourret J."/>
            <person name="Vacherie B."/>
            <person name="Vallenet D."/>
            <person name="Medigue C."/>
            <person name="Rocha E.P.C."/>
            <person name="Denamur E."/>
        </authorList>
    </citation>
    <scope>NUCLEOTIDE SEQUENCE [LARGE SCALE GENOMIC DNA]</scope>
    <source>
        <strain>ED1a</strain>
    </source>
</reference>
<organism>
    <name type="scientific">Escherichia coli O81 (strain ED1a)</name>
    <dbReference type="NCBI Taxonomy" id="585397"/>
    <lineage>
        <taxon>Bacteria</taxon>
        <taxon>Pseudomonadati</taxon>
        <taxon>Pseudomonadota</taxon>
        <taxon>Gammaproteobacteria</taxon>
        <taxon>Enterobacterales</taxon>
        <taxon>Enterobacteriaceae</taxon>
        <taxon>Escherichia</taxon>
    </lineage>
</organism>
<name>PEPT_ECO81</name>
<proteinExistence type="inferred from homology"/>
<keyword id="KW-0031">Aminopeptidase</keyword>
<keyword id="KW-0963">Cytoplasm</keyword>
<keyword id="KW-0378">Hydrolase</keyword>
<keyword id="KW-0479">Metal-binding</keyword>
<keyword id="KW-0482">Metalloprotease</keyword>
<keyword id="KW-0645">Protease</keyword>
<keyword id="KW-0862">Zinc</keyword>
<comment type="function">
    <text evidence="1">Cleaves the N-terminal amino acid of tripeptides.</text>
</comment>
<comment type="catalytic activity">
    <reaction evidence="1">
        <text>Release of the N-terminal residue from a tripeptide.</text>
        <dbReference type="EC" id="3.4.11.4"/>
    </reaction>
</comment>
<comment type="cofactor">
    <cofactor evidence="1">
        <name>Zn(2+)</name>
        <dbReference type="ChEBI" id="CHEBI:29105"/>
    </cofactor>
    <text evidence="1">Binds 2 Zn(2+) ions per subunit.</text>
</comment>
<comment type="subcellular location">
    <subcellularLocation>
        <location evidence="1">Cytoplasm</location>
    </subcellularLocation>
</comment>
<comment type="similarity">
    <text evidence="1">Belongs to the peptidase M20B family.</text>
</comment>